<accession>Q5HUY1</accession>
<reference key="1">
    <citation type="journal article" date="2005" name="PLoS Biol.">
        <title>Major structural differences and novel potential virulence mechanisms from the genomes of multiple Campylobacter species.</title>
        <authorList>
            <person name="Fouts D.E."/>
            <person name="Mongodin E.F."/>
            <person name="Mandrell R.E."/>
            <person name="Miller W.G."/>
            <person name="Rasko D.A."/>
            <person name="Ravel J."/>
            <person name="Brinkac L.M."/>
            <person name="DeBoy R.T."/>
            <person name="Parker C.T."/>
            <person name="Daugherty S.C."/>
            <person name="Dodson R.J."/>
            <person name="Durkin A.S."/>
            <person name="Madupu R."/>
            <person name="Sullivan S.A."/>
            <person name="Shetty J.U."/>
            <person name="Ayodeji M.A."/>
            <person name="Shvartsbeyn A."/>
            <person name="Schatz M.C."/>
            <person name="Badger J.H."/>
            <person name="Fraser C.M."/>
            <person name="Nelson K.E."/>
        </authorList>
    </citation>
    <scope>NUCLEOTIDE SEQUENCE [LARGE SCALE GENOMIC DNA]</scope>
    <source>
        <strain>RM1221</strain>
    </source>
</reference>
<feature type="chain" id="PRO_0000229950" description="Tetraacyldisaccharide 4'-kinase">
    <location>
        <begin position="1"/>
        <end position="308"/>
    </location>
</feature>
<feature type="binding site" evidence="1">
    <location>
        <begin position="63"/>
        <end position="70"/>
    </location>
    <ligand>
        <name>ATP</name>
        <dbReference type="ChEBI" id="CHEBI:30616"/>
    </ligand>
</feature>
<proteinExistence type="inferred from homology"/>
<evidence type="ECO:0000255" key="1">
    <source>
        <dbReference type="HAMAP-Rule" id="MF_00409"/>
    </source>
</evidence>
<name>LPXK_CAMJR</name>
<protein>
    <recommendedName>
        <fullName evidence="1">Tetraacyldisaccharide 4'-kinase</fullName>
        <ecNumber evidence="1">2.7.1.130</ecNumber>
    </recommendedName>
    <alternativeName>
        <fullName evidence="1">Lipid A 4'-kinase</fullName>
    </alternativeName>
</protein>
<keyword id="KW-0067">ATP-binding</keyword>
<keyword id="KW-0418">Kinase</keyword>
<keyword id="KW-0441">Lipid A biosynthesis</keyword>
<keyword id="KW-0444">Lipid biosynthesis</keyword>
<keyword id="KW-0443">Lipid metabolism</keyword>
<keyword id="KW-0547">Nucleotide-binding</keyword>
<keyword id="KW-0808">Transferase</keyword>
<dbReference type="EC" id="2.7.1.130" evidence="1"/>
<dbReference type="EMBL" id="CP000025">
    <property type="protein sequence ID" value="AAW35239.1"/>
    <property type="molecule type" value="Genomic_DNA"/>
</dbReference>
<dbReference type="RefSeq" id="WP_002867960.1">
    <property type="nucleotide sequence ID" value="NC_003912.7"/>
</dbReference>
<dbReference type="SMR" id="Q5HUY1"/>
<dbReference type="KEGG" id="cjr:CJE0902"/>
<dbReference type="HOGENOM" id="CLU_038816_1_0_7"/>
<dbReference type="UniPathway" id="UPA00359">
    <property type="reaction ID" value="UER00482"/>
</dbReference>
<dbReference type="GO" id="GO:0005886">
    <property type="term" value="C:plasma membrane"/>
    <property type="evidence" value="ECO:0007669"/>
    <property type="project" value="TreeGrafter"/>
</dbReference>
<dbReference type="GO" id="GO:0005524">
    <property type="term" value="F:ATP binding"/>
    <property type="evidence" value="ECO:0007669"/>
    <property type="project" value="UniProtKB-UniRule"/>
</dbReference>
<dbReference type="GO" id="GO:0009029">
    <property type="term" value="F:tetraacyldisaccharide 4'-kinase activity"/>
    <property type="evidence" value="ECO:0007669"/>
    <property type="project" value="UniProtKB-UniRule"/>
</dbReference>
<dbReference type="GO" id="GO:0009245">
    <property type="term" value="P:lipid A biosynthetic process"/>
    <property type="evidence" value="ECO:0007669"/>
    <property type="project" value="UniProtKB-UniRule"/>
</dbReference>
<dbReference type="GO" id="GO:0009244">
    <property type="term" value="P:lipopolysaccharide core region biosynthetic process"/>
    <property type="evidence" value="ECO:0007669"/>
    <property type="project" value="TreeGrafter"/>
</dbReference>
<dbReference type="HAMAP" id="MF_00409">
    <property type="entry name" value="LpxK"/>
    <property type="match status" value="1"/>
</dbReference>
<dbReference type="InterPro" id="IPR003758">
    <property type="entry name" value="LpxK"/>
</dbReference>
<dbReference type="NCBIfam" id="NF001892">
    <property type="entry name" value="PRK00652.1-5"/>
    <property type="match status" value="1"/>
</dbReference>
<dbReference type="PANTHER" id="PTHR42724">
    <property type="entry name" value="TETRAACYLDISACCHARIDE 4'-KINASE"/>
    <property type="match status" value="1"/>
</dbReference>
<dbReference type="PANTHER" id="PTHR42724:SF1">
    <property type="entry name" value="TETRAACYLDISACCHARIDE 4'-KINASE, MITOCHONDRIAL-RELATED"/>
    <property type="match status" value="1"/>
</dbReference>
<dbReference type="Pfam" id="PF02606">
    <property type="entry name" value="LpxK"/>
    <property type="match status" value="2"/>
</dbReference>
<comment type="function">
    <text evidence="1">Transfers the gamma-phosphate of ATP to the 4'-position of a tetraacyldisaccharide 1-phosphate intermediate (termed DS-1-P) to form tetraacyldisaccharide 1,4'-bis-phosphate (lipid IVA).</text>
</comment>
<comment type="catalytic activity">
    <reaction evidence="1">
        <text>a lipid A disaccharide + ATP = a lipid IVA + ADP + H(+)</text>
        <dbReference type="Rhea" id="RHEA:67840"/>
        <dbReference type="ChEBI" id="CHEBI:15378"/>
        <dbReference type="ChEBI" id="CHEBI:30616"/>
        <dbReference type="ChEBI" id="CHEBI:176343"/>
        <dbReference type="ChEBI" id="CHEBI:176425"/>
        <dbReference type="ChEBI" id="CHEBI:456216"/>
        <dbReference type="EC" id="2.7.1.130"/>
    </reaction>
</comment>
<comment type="pathway">
    <text evidence="1">Glycolipid biosynthesis; lipid IV(A) biosynthesis; lipid IV(A) from (3R)-3-hydroxytetradecanoyl-[acyl-carrier-protein] and UDP-N-acetyl-alpha-D-glucosamine: step 6/6.</text>
</comment>
<comment type="similarity">
    <text evidence="1">Belongs to the LpxK family.</text>
</comment>
<gene>
    <name evidence="1" type="primary">lpxK</name>
    <name type="ordered locus">CJE0902</name>
</gene>
<sequence>MNEEKNYELWLDNYFFKPNFWQKCLAFILLPLSVLYAFFAILNTFFRKKIVFKKPVISVGNLSFGGNGKTPLCKAIAREFDGVFIVLRGYKRKSKGLFVVKNQNEILCTLVQSGDEAMEYAFEENIKGVIVSEDRVKGIEKAFELGAKIVVLDDAFSKFHIKKFDILLESKIKPYFDFTLPSGAYRLPKFYEKRADFIALEGRDFVRYSFVKENPKAVLATAIAKPFRLYEHFIKARACYFFKDHYEFKKEELENLLKKHNCDTLMLTFKDFVKVKDFGFKCQIIELNIELKDSLREKIKTYIKEFEQ</sequence>
<organism>
    <name type="scientific">Campylobacter jejuni (strain RM1221)</name>
    <dbReference type="NCBI Taxonomy" id="195099"/>
    <lineage>
        <taxon>Bacteria</taxon>
        <taxon>Pseudomonadati</taxon>
        <taxon>Campylobacterota</taxon>
        <taxon>Epsilonproteobacteria</taxon>
        <taxon>Campylobacterales</taxon>
        <taxon>Campylobacteraceae</taxon>
        <taxon>Campylobacter</taxon>
    </lineage>
</organism>